<evidence type="ECO:0000250" key="1"/>
<evidence type="ECO:0000256" key="2">
    <source>
        <dbReference type="SAM" id="MobiDB-lite"/>
    </source>
</evidence>
<evidence type="ECO:0000305" key="3"/>
<sequence>MNSLVATPPVPPHFYEYSRLSSPHPMSTPTHTPTNRKRKADDDGNDHDGRMSASPTNSPAFTPRSLPAPRSFKRSRPNVSGRPLSLPRLLETLDTDALRGILRSMCERHPALADEVIHTSPRPSVSSALQVLRNYQSTLQNSFPLGGNPESDYAYNRVRQPLGNLLDALSDFTPHFLPPHETQASVSLSYLDGATDIIHALPRWHSPQNNIERDSAYDEICKAWILVIREAAKRGGGIQLQYGGWDQKLAKHNQNAGGRLQAAVNELGNSLGWMHGPDSQGYGSSTGGDLVSVREQLLSGTYGLGTPVKVGPW</sequence>
<reference key="1">
    <citation type="journal article" date="2008" name="PLoS Genet.">
        <title>Genomic islands in the pathogenic filamentous fungus Aspergillus fumigatus.</title>
        <authorList>
            <person name="Fedorova N.D."/>
            <person name="Khaldi N."/>
            <person name="Joardar V.S."/>
            <person name="Maiti R."/>
            <person name="Amedeo P."/>
            <person name="Anderson M.J."/>
            <person name="Crabtree J."/>
            <person name="Silva J.C."/>
            <person name="Badger J.H."/>
            <person name="Albarraq A."/>
            <person name="Angiuoli S."/>
            <person name="Bussey H."/>
            <person name="Bowyer P."/>
            <person name="Cotty P.J."/>
            <person name="Dyer P.S."/>
            <person name="Egan A."/>
            <person name="Galens K."/>
            <person name="Fraser-Liggett C.M."/>
            <person name="Haas B.J."/>
            <person name="Inman J.M."/>
            <person name="Kent R."/>
            <person name="Lemieux S."/>
            <person name="Malavazi I."/>
            <person name="Orvis J."/>
            <person name="Roemer T."/>
            <person name="Ronning C.M."/>
            <person name="Sundaram J.P."/>
            <person name="Sutton G."/>
            <person name="Turner G."/>
            <person name="Venter J.C."/>
            <person name="White O.R."/>
            <person name="Whitty B.R."/>
            <person name="Youngman P."/>
            <person name="Wolfe K.H."/>
            <person name="Goldman G.H."/>
            <person name="Wortman J.R."/>
            <person name="Jiang B."/>
            <person name="Denning D.W."/>
            <person name="Nierman W.C."/>
        </authorList>
    </citation>
    <scope>NUCLEOTIDE SEQUENCE [LARGE SCALE GENOMIC DNA]</scope>
    <source>
        <strain>ATCC 1020 / DSM 3700 / CBS 544.65 / FGSC A1164 / JCM 1740 / NRRL 181 / WB 181</strain>
    </source>
</reference>
<accession>A1CXR0</accession>
<name>STS1_NEOFI</name>
<keyword id="KW-0963">Cytoplasm</keyword>
<keyword id="KW-0539">Nucleus</keyword>
<keyword id="KW-0653">Protein transport</keyword>
<keyword id="KW-1185">Reference proteome</keyword>
<keyword id="KW-0813">Transport</keyword>
<proteinExistence type="inferred from homology"/>
<comment type="function">
    <text evidence="1">Involved in ubiquitin-mediated protein degradation. Regulatory factor in the ubiquitin/proteasome pathway that controls the turnover of proteasome substrates. Targets proteasomes to the nucleus and facilitates the degradation of nuclear proteins (By similarity).</text>
</comment>
<comment type="subunit">
    <text evidence="1">Binds the proteasome.</text>
</comment>
<comment type="subcellular location">
    <subcellularLocation>
        <location evidence="1">Cytoplasm</location>
    </subcellularLocation>
    <subcellularLocation>
        <location evidence="1">Nucleus</location>
    </subcellularLocation>
</comment>
<comment type="similarity">
    <text evidence="3">Belongs to the cut8/STS1 family.</text>
</comment>
<dbReference type="EMBL" id="DS027685">
    <property type="protein sequence ID" value="EAW25412.1"/>
    <property type="molecule type" value="Genomic_DNA"/>
</dbReference>
<dbReference type="RefSeq" id="XP_001267309.1">
    <property type="nucleotide sequence ID" value="XM_001267308.1"/>
</dbReference>
<dbReference type="SMR" id="A1CXR0"/>
<dbReference type="STRING" id="331117.A1CXR0"/>
<dbReference type="EnsemblFungi" id="EAW25412">
    <property type="protein sequence ID" value="EAW25412"/>
    <property type="gene ID" value="NFIA_109050"/>
</dbReference>
<dbReference type="GeneID" id="4593400"/>
<dbReference type="KEGG" id="nfi:NFIA_109050"/>
<dbReference type="VEuPathDB" id="FungiDB:NFIA_109050"/>
<dbReference type="eggNOG" id="ENOG502RNK4">
    <property type="taxonomic scope" value="Eukaryota"/>
</dbReference>
<dbReference type="HOGENOM" id="CLU_033658_0_0_1"/>
<dbReference type="OMA" id="DYTPHFL"/>
<dbReference type="OrthoDB" id="10061064at2759"/>
<dbReference type="Proteomes" id="UP000006702">
    <property type="component" value="Unassembled WGS sequence"/>
</dbReference>
<dbReference type="GO" id="GO:0005737">
    <property type="term" value="C:cytoplasm"/>
    <property type="evidence" value="ECO:0007669"/>
    <property type="project" value="UniProtKB-SubCell"/>
</dbReference>
<dbReference type="GO" id="GO:0031965">
    <property type="term" value="C:nuclear membrane"/>
    <property type="evidence" value="ECO:0007669"/>
    <property type="project" value="TreeGrafter"/>
</dbReference>
<dbReference type="GO" id="GO:0070628">
    <property type="term" value="F:proteasome binding"/>
    <property type="evidence" value="ECO:0007669"/>
    <property type="project" value="TreeGrafter"/>
</dbReference>
<dbReference type="GO" id="GO:0071630">
    <property type="term" value="P:nuclear protein quality control by the ubiquitin-proteasome system"/>
    <property type="evidence" value="ECO:0007669"/>
    <property type="project" value="InterPro"/>
</dbReference>
<dbReference type="GO" id="GO:0031144">
    <property type="term" value="P:proteasome localization"/>
    <property type="evidence" value="ECO:0007669"/>
    <property type="project" value="InterPro"/>
</dbReference>
<dbReference type="GO" id="GO:0015031">
    <property type="term" value="P:protein transport"/>
    <property type="evidence" value="ECO:0007669"/>
    <property type="project" value="UniProtKB-KW"/>
</dbReference>
<dbReference type="FunFam" id="1.20.58.1590:FF:000001">
    <property type="entry name" value="Tethering factor for nuclear proteasome STS1"/>
    <property type="match status" value="1"/>
</dbReference>
<dbReference type="Gene3D" id="1.20.58.1590">
    <property type="entry name" value="Tethering factor for nuclear proteasome Cut8/Sts1"/>
    <property type="match status" value="1"/>
</dbReference>
<dbReference type="InterPro" id="IPR013868">
    <property type="entry name" value="Cut8/Sts1_fam"/>
</dbReference>
<dbReference type="InterPro" id="IPR038422">
    <property type="entry name" value="Cut8/Sts1_sf"/>
</dbReference>
<dbReference type="PANTHER" id="PTHR28032">
    <property type="entry name" value="FI02826P"/>
    <property type="match status" value="1"/>
</dbReference>
<dbReference type="PANTHER" id="PTHR28032:SF1">
    <property type="entry name" value="FI02826P"/>
    <property type="match status" value="1"/>
</dbReference>
<dbReference type="Pfam" id="PF08559">
    <property type="entry name" value="Cut8"/>
    <property type="match status" value="1"/>
</dbReference>
<protein>
    <recommendedName>
        <fullName>Tethering factor for nuclear proteasome sts1</fullName>
    </recommendedName>
</protein>
<organism>
    <name type="scientific">Neosartorya fischeri (strain ATCC 1020 / DSM 3700 / CBS 544.65 / FGSC A1164 / JCM 1740 / NRRL 181 / WB 181)</name>
    <name type="common">Aspergillus fischerianus</name>
    <dbReference type="NCBI Taxonomy" id="331117"/>
    <lineage>
        <taxon>Eukaryota</taxon>
        <taxon>Fungi</taxon>
        <taxon>Dikarya</taxon>
        <taxon>Ascomycota</taxon>
        <taxon>Pezizomycotina</taxon>
        <taxon>Eurotiomycetes</taxon>
        <taxon>Eurotiomycetidae</taxon>
        <taxon>Eurotiales</taxon>
        <taxon>Aspergillaceae</taxon>
        <taxon>Aspergillus</taxon>
        <taxon>Aspergillus subgen. Fumigati</taxon>
    </lineage>
</organism>
<gene>
    <name type="primary">sts1</name>
    <name type="ORF">NFIA_109050</name>
</gene>
<feature type="chain" id="PRO_0000409418" description="Tethering factor for nuclear proteasome sts1">
    <location>
        <begin position="1"/>
        <end position="313"/>
    </location>
</feature>
<feature type="region of interest" description="Disordered" evidence="2">
    <location>
        <begin position="16"/>
        <end position="84"/>
    </location>
</feature>
<feature type="compositionally biased region" description="Low complexity" evidence="2">
    <location>
        <begin position="21"/>
        <end position="33"/>
    </location>
</feature>
<feature type="compositionally biased region" description="Basic and acidic residues" evidence="2">
    <location>
        <begin position="39"/>
        <end position="50"/>
    </location>
</feature>